<dbReference type="EMBL" id="CP001392">
    <property type="protein sequence ID" value="ACM33014.1"/>
    <property type="molecule type" value="Genomic_DNA"/>
</dbReference>
<dbReference type="RefSeq" id="WP_011805513.1">
    <property type="nucleotide sequence ID" value="NC_011992.1"/>
</dbReference>
<dbReference type="SMR" id="B9MI82"/>
<dbReference type="KEGG" id="dia:Dtpsy_1553"/>
<dbReference type="eggNOG" id="COG2835">
    <property type="taxonomic scope" value="Bacteria"/>
</dbReference>
<dbReference type="HOGENOM" id="CLU_155659_2_2_4"/>
<dbReference type="Proteomes" id="UP000000450">
    <property type="component" value="Chromosome"/>
</dbReference>
<dbReference type="GO" id="GO:0005829">
    <property type="term" value="C:cytosol"/>
    <property type="evidence" value="ECO:0007669"/>
    <property type="project" value="TreeGrafter"/>
</dbReference>
<dbReference type="FunFam" id="2.20.25.10:FF:000002">
    <property type="entry name" value="UPF0434 protein YcaR"/>
    <property type="match status" value="1"/>
</dbReference>
<dbReference type="Gene3D" id="2.20.25.10">
    <property type="match status" value="1"/>
</dbReference>
<dbReference type="HAMAP" id="MF_01187">
    <property type="entry name" value="UPF0434"/>
    <property type="match status" value="1"/>
</dbReference>
<dbReference type="InterPro" id="IPR005651">
    <property type="entry name" value="Trm112-like"/>
</dbReference>
<dbReference type="PANTHER" id="PTHR33505:SF4">
    <property type="entry name" value="PROTEIN PREY, MITOCHONDRIAL"/>
    <property type="match status" value="1"/>
</dbReference>
<dbReference type="PANTHER" id="PTHR33505">
    <property type="entry name" value="ZGC:162634"/>
    <property type="match status" value="1"/>
</dbReference>
<dbReference type="Pfam" id="PF03966">
    <property type="entry name" value="Trm112p"/>
    <property type="match status" value="1"/>
</dbReference>
<dbReference type="SUPFAM" id="SSF158997">
    <property type="entry name" value="Trm112p-like"/>
    <property type="match status" value="1"/>
</dbReference>
<evidence type="ECO:0000255" key="1">
    <source>
        <dbReference type="HAMAP-Rule" id="MF_01187"/>
    </source>
</evidence>
<sequence length="60" mass="6877">MDPKLLELLVCPVTKGPLTYDRERQELISRSARLAYPVRDGIPVLLENEARPLSDEELEQ</sequence>
<gene>
    <name type="ordered locus">Dtpsy_1553</name>
</gene>
<reference key="1">
    <citation type="submission" date="2009-01" db="EMBL/GenBank/DDBJ databases">
        <title>Complete sequence of Diaphorobacter sp. TPSY.</title>
        <authorList>
            <consortium name="US DOE Joint Genome Institute"/>
            <person name="Lucas S."/>
            <person name="Copeland A."/>
            <person name="Lapidus A."/>
            <person name="Glavina del Rio T."/>
            <person name="Tice H."/>
            <person name="Bruce D."/>
            <person name="Goodwin L."/>
            <person name="Pitluck S."/>
            <person name="Chertkov O."/>
            <person name="Brettin T."/>
            <person name="Detter J.C."/>
            <person name="Han C."/>
            <person name="Larimer F."/>
            <person name="Land M."/>
            <person name="Hauser L."/>
            <person name="Kyrpides N."/>
            <person name="Mikhailova N."/>
            <person name="Coates J.D."/>
        </authorList>
    </citation>
    <scope>NUCLEOTIDE SEQUENCE [LARGE SCALE GENOMIC DNA]</scope>
    <source>
        <strain>TPSY</strain>
    </source>
</reference>
<organism>
    <name type="scientific">Acidovorax ebreus (strain TPSY)</name>
    <name type="common">Diaphorobacter sp. (strain TPSY)</name>
    <dbReference type="NCBI Taxonomy" id="535289"/>
    <lineage>
        <taxon>Bacteria</taxon>
        <taxon>Pseudomonadati</taxon>
        <taxon>Pseudomonadota</taxon>
        <taxon>Betaproteobacteria</taxon>
        <taxon>Burkholderiales</taxon>
        <taxon>Comamonadaceae</taxon>
        <taxon>Diaphorobacter</taxon>
    </lineage>
</organism>
<protein>
    <recommendedName>
        <fullName evidence="1">UPF0434 protein Dtpsy_1553</fullName>
    </recommendedName>
</protein>
<feature type="chain" id="PRO_1000164481" description="UPF0434 protein Dtpsy_1553">
    <location>
        <begin position="1"/>
        <end position="60"/>
    </location>
</feature>
<keyword id="KW-1185">Reference proteome</keyword>
<proteinExistence type="inferred from homology"/>
<name>Y1553_ACIET</name>
<accession>B9MI82</accession>
<comment type="similarity">
    <text evidence="1">Belongs to the UPF0434 family.</text>
</comment>